<reference key="1">
    <citation type="journal article" date="2007" name="Genome Res.">
        <title>Genome sequence of a proteolytic (Group I) Clostridium botulinum strain Hall A and comparative analysis of the clostridial genomes.</title>
        <authorList>
            <person name="Sebaihia M."/>
            <person name="Peck M.W."/>
            <person name="Minton N.P."/>
            <person name="Thomson N.R."/>
            <person name="Holden M.T.G."/>
            <person name="Mitchell W.J."/>
            <person name="Carter A.T."/>
            <person name="Bentley S.D."/>
            <person name="Mason D.R."/>
            <person name="Crossman L."/>
            <person name="Paul C.J."/>
            <person name="Ivens A."/>
            <person name="Wells-Bennik M.H.J."/>
            <person name="Davis I.J."/>
            <person name="Cerdeno-Tarraga A.M."/>
            <person name="Churcher C."/>
            <person name="Quail M.A."/>
            <person name="Chillingworth T."/>
            <person name="Feltwell T."/>
            <person name="Fraser A."/>
            <person name="Goodhead I."/>
            <person name="Hance Z."/>
            <person name="Jagels K."/>
            <person name="Larke N."/>
            <person name="Maddison M."/>
            <person name="Moule S."/>
            <person name="Mungall K."/>
            <person name="Norbertczak H."/>
            <person name="Rabbinowitsch E."/>
            <person name="Sanders M."/>
            <person name="Simmonds M."/>
            <person name="White B."/>
            <person name="Whithead S."/>
            <person name="Parkhill J."/>
        </authorList>
    </citation>
    <scope>NUCLEOTIDE SEQUENCE [LARGE SCALE GENOMIC DNA]</scope>
    <source>
        <strain>Hall / ATCC 3502 / NCTC 13319 / Type A</strain>
    </source>
</reference>
<reference key="2">
    <citation type="journal article" date="2007" name="PLoS ONE">
        <title>Analysis of the neurotoxin complex genes in Clostridium botulinum A1-A4 and B1 strains: BoNT/A3, /Ba4 and /B1 clusters are located within plasmids.</title>
        <authorList>
            <person name="Smith T.J."/>
            <person name="Hill K.K."/>
            <person name="Foley B.T."/>
            <person name="Detter J.C."/>
            <person name="Munk A.C."/>
            <person name="Bruce D.C."/>
            <person name="Doggett N.A."/>
            <person name="Smith L.A."/>
            <person name="Marks J.D."/>
            <person name="Xie G."/>
            <person name="Brettin T.S."/>
        </authorList>
    </citation>
    <scope>NUCLEOTIDE SEQUENCE [LARGE SCALE GENOMIC DNA]</scope>
    <source>
        <strain>Hall / ATCC 3502 / NCTC 13319 / Type A</strain>
    </source>
</reference>
<dbReference type="EC" id="7.1.2.2" evidence="1"/>
<dbReference type="EMBL" id="CP000727">
    <property type="protein sequence ID" value="ABS39106.1"/>
    <property type="molecule type" value="Genomic_DNA"/>
</dbReference>
<dbReference type="EMBL" id="AM412317">
    <property type="protein sequence ID" value="CAL81709.1"/>
    <property type="molecule type" value="Genomic_DNA"/>
</dbReference>
<dbReference type="RefSeq" id="WP_003356056.1">
    <property type="nucleotide sequence ID" value="NC_009698.1"/>
</dbReference>
<dbReference type="RefSeq" id="YP_001252701.1">
    <property type="nucleotide sequence ID" value="NC_009495.1"/>
</dbReference>
<dbReference type="RefSeq" id="YP_001386113.1">
    <property type="nucleotide sequence ID" value="NC_009698.1"/>
</dbReference>
<dbReference type="SMR" id="A5HY50"/>
<dbReference type="GeneID" id="5184409"/>
<dbReference type="KEGG" id="cbh:CLC_0202"/>
<dbReference type="KEGG" id="cbo:CBO0154"/>
<dbReference type="PATRIC" id="fig|413999.7.peg.153"/>
<dbReference type="HOGENOM" id="CLU_010091_2_1_9"/>
<dbReference type="PRO" id="PR:A5HY50"/>
<dbReference type="Proteomes" id="UP000001986">
    <property type="component" value="Chromosome"/>
</dbReference>
<dbReference type="GO" id="GO:0005886">
    <property type="term" value="C:plasma membrane"/>
    <property type="evidence" value="ECO:0007669"/>
    <property type="project" value="UniProtKB-SubCell"/>
</dbReference>
<dbReference type="GO" id="GO:0045259">
    <property type="term" value="C:proton-transporting ATP synthase complex"/>
    <property type="evidence" value="ECO:0007669"/>
    <property type="project" value="UniProtKB-KW"/>
</dbReference>
<dbReference type="GO" id="GO:0043531">
    <property type="term" value="F:ADP binding"/>
    <property type="evidence" value="ECO:0000318"/>
    <property type="project" value="GO_Central"/>
</dbReference>
<dbReference type="GO" id="GO:0005524">
    <property type="term" value="F:ATP binding"/>
    <property type="evidence" value="ECO:0000318"/>
    <property type="project" value="GO_Central"/>
</dbReference>
<dbReference type="GO" id="GO:0046933">
    <property type="term" value="F:proton-transporting ATP synthase activity, rotational mechanism"/>
    <property type="evidence" value="ECO:0007669"/>
    <property type="project" value="UniProtKB-UniRule"/>
</dbReference>
<dbReference type="GO" id="GO:0015986">
    <property type="term" value="P:proton motive force-driven ATP synthesis"/>
    <property type="evidence" value="ECO:0000318"/>
    <property type="project" value="GO_Central"/>
</dbReference>
<dbReference type="CDD" id="cd18113">
    <property type="entry name" value="ATP-synt_F1_alpha_C"/>
    <property type="match status" value="1"/>
</dbReference>
<dbReference type="CDD" id="cd18116">
    <property type="entry name" value="ATP-synt_F1_alpha_N"/>
    <property type="match status" value="1"/>
</dbReference>
<dbReference type="CDD" id="cd01132">
    <property type="entry name" value="F1-ATPase_alpha_CD"/>
    <property type="match status" value="1"/>
</dbReference>
<dbReference type="FunFam" id="1.20.150.20:FF:000001">
    <property type="entry name" value="ATP synthase subunit alpha"/>
    <property type="match status" value="1"/>
</dbReference>
<dbReference type="FunFam" id="2.40.30.20:FF:000001">
    <property type="entry name" value="ATP synthase subunit alpha"/>
    <property type="match status" value="1"/>
</dbReference>
<dbReference type="FunFam" id="3.40.50.300:FF:000002">
    <property type="entry name" value="ATP synthase subunit alpha"/>
    <property type="match status" value="1"/>
</dbReference>
<dbReference type="Gene3D" id="2.40.30.20">
    <property type="match status" value="1"/>
</dbReference>
<dbReference type="Gene3D" id="1.20.150.20">
    <property type="entry name" value="ATP synthase alpha/beta chain, C-terminal domain"/>
    <property type="match status" value="1"/>
</dbReference>
<dbReference type="Gene3D" id="3.40.50.300">
    <property type="entry name" value="P-loop containing nucleotide triphosphate hydrolases"/>
    <property type="match status" value="1"/>
</dbReference>
<dbReference type="HAMAP" id="MF_01346">
    <property type="entry name" value="ATP_synth_alpha_bact"/>
    <property type="match status" value="1"/>
</dbReference>
<dbReference type="InterPro" id="IPR023366">
    <property type="entry name" value="ATP_synth_asu-like_sf"/>
</dbReference>
<dbReference type="InterPro" id="IPR000793">
    <property type="entry name" value="ATP_synth_asu_C"/>
</dbReference>
<dbReference type="InterPro" id="IPR038376">
    <property type="entry name" value="ATP_synth_asu_C_sf"/>
</dbReference>
<dbReference type="InterPro" id="IPR033732">
    <property type="entry name" value="ATP_synth_F1_a_nt-bd_dom"/>
</dbReference>
<dbReference type="InterPro" id="IPR005294">
    <property type="entry name" value="ATP_synth_F1_asu"/>
</dbReference>
<dbReference type="InterPro" id="IPR020003">
    <property type="entry name" value="ATPase_a/bsu_AS"/>
</dbReference>
<dbReference type="InterPro" id="IPR004100">
    <property type="entry name" value="ATPase_F1/V1/A1_a/bsu_N"/>
</dbReference>
<dbReference type="InterPro" id="IPR036121">
    <property type="entry name" value="ATPase_F1/V1/A1_a/bsu_N_sf"/>
</dbReference>
<dbReference type="InterPro" id="IPR000194">
    <property type="entry name" value="ATPase_F1/V1/A1_a/bsu_nucl-bd"/>
</dbReference>
<dbReference type="InterPro" id="IPR027417">
    <property type="entry name" value="P-loop_NTPase"/>
</dbReference>
<dbReference type="NCBIfam" id="TIGR00962">
    <property type="entry name" value="atpA"/>
    <property type="match status" value="1"/>
</dbReference>
<dbReference type="NCBIfam" id="NF009884">
    <property type="entry name" value="PRK13343.1"/>
    <property type="match status" value="1"/>
</dbReference>
<dbReference type="PANTHER" id="PTHR48082">
    <property type="entry name" value="ATP SYNTHASE SUBUNIT ALPHA, MITOCHONDRIAL"/>
    <property type="match status" value="1"/>
</dbReference>
<dbReference type="PANTHER" id="PTHR48082:SF2">
    <property type="entry name" value="ATP SYNTHASE SUBUNIT ALPHA, MITOCHONDRIAL"/>
    <property type="match status" value="1"/>
</dbReference>
<dbReference type="Pfam" id="PF00006">
    <property type="entry name" value="ATP-synt_ab"/>
    <property type="match status" value="1"/>
</dbReference>
<dbReference type="Pfam" id="PF00306">
    <property type="entry name" value="ATP-synt_ab_C"/>
    <property type="match status" value="1"/>
</dbReference>
<dbReference type="Pfam" id="PF02874">
    <property type="entry name" value="ATP-synt_ab_N"/>
    <property type="match status" value="1"/>
</dbReference>
<dbReference type="PIRSF" id="PIRSF039088">
    <property type="entry name" value="F_ATPase_subunit_alpha"/>
    <property type="match status" value="1"/>
</dbReference>
<dbReference type="SUPFAM" id="SSF47917">
    <property type="entry name" value="C-terminal domain of alpha and beta subunits of F1 ATP synthase"/>
    <property type="match status" value="1"/>
</dbReference>
<dbReference type="SUPFAM" id="SSF50615">
    <property type="entry name" value="N-terminal domain of alpha and beta subunits of F1 ATP synthase"/>
    <property type="match status" value="1"/>
</dbReference>
<dbReference type="SUPFAM" id="SSF52540">
    <property type="entry name" value="P-loop containing nucleoside triphosphate hydrolases"/>
    <property type="match status" value="1"/>
</dbReference>
<dbReference type="PROSITE" id="PS00152">
    <property type="entry name" value="ATPASE_ALPHA_BETA"/>
    <property type="match status" value="1"/>
</dbReference>
<protein>
    <recommendedName>
        <fullName evidence="1">ATP synthase subunit alpha</fullName>
        <ecNumber evidence="1">7.1.2.2</ecNumber>
    </recommendedName>
    <alternativeName>
        <fullName evidence="1">ATP synthase F1 sector subunit alpha</fullName>
    </alternativeName>
    <alternativeName>
        <fullName evidence="1">F-ATPase subunit alpha</fullName>
    </alternativeName>
</protein>
<name>ATPA_CLOBH</name>
<keyword id="KW-0066">ATP synthesis</keyword>
<keyword id="KW-0067">ATP-binding</keyword>
<keyword id="KW-1003">Cell membrane</keyword>
<keyword id="KW-0139">CF(1)</keyword>
<keyword id="KW-0375">Hydrogen ion transport</keyword>
<keyword id="KW-0406">Ion transport</keyword>
<keyword id="KW-0472">Membrane</keyword>
<keyword id="KW-0547">Nucleotide-binding</keyword>
<keyword id="KW-1185">Reference proteome</keyword>
<keyword id="KW-1278">Translocase</keyword>
<keyword id="KW-0813">Transport</keyword>
<evidence type="ECO:0000255" key="1">
    <source>
        <dbReference type="HAMAP-Rule" id="MF_01346"/>
    </source>
</evidence>
<comment type="function">
    <text evidence="1">Produces ATP from ADP in the presence of a proton gradient across the membrane. The alpha chain is a regulatory subunit.</text>
</comment>
<comment type="catalytic activity">
    <reaction evidence="1">
        <text>ATP + H2O + 4 H(+)(in) = ADP + phosphate + 5 H(+)(out)</text>
        <dbReference type="Rhea" id="RHEA:57720"/>
        <dbReference type="ChEBI" id="CHEBI:15377"/>
        <dbReference type="ChEBI" id="CHEBI:15378"/>
        <dbReference type="ChEBI" id="CHEBI:30616"/>
        <dbReference type="ChEBI" id="CHEBI:43474"/>
        <dbReference type="ChEBI" id="CHEBI:456216"/>
        <dbReference type="EC" id="7.1.2.2"/>
    </reaction>
</comment>
<comment type="subunit">
    <text evidence="1">F-type ATPases have 2 components, CF(1) - the catalytic core - and CF(0) - the membrane proton channel. CF(1) has five subunits: alpha(3), beta(3), gamma(1), delta(1), epsilon(1). CF(0) has three main subunits: a(1), b(2) and c(9-12). The alpha and beta chains form an alternating ring which encloses part of the gamma chain. CF(1) is attached to CF(0) by a central stalk formed by the gamma and epsilon chains, while a peripheral stalk is formed by the delta and b chains.</text>
</comment>
<comment type="subcellular location">
    <subcellularLocation>
        <location evidence="1">Cell membrane</location>
        <topology evidence="1">Peripheral membrane protein</topology>
    </subcellularLocation>
</comment>
<comment type="similarity">
    <text evidence="1">Belongs to the ATPase alpha/beta chains family.</text>
</comment>
<accession>A5HY50</accession>
<accession>A7G070</accession>
<proteinExistence type="inferred from homology"/>
<feature type="chain" id="PRO_1000055063" description="ATP synthase subunit alpha">
    <location>
        <begin position="1"/>
        <end position="504"/>
    </location>
</feature>
<feature type="binding site" evidence="1">
    <location>
        <begin position="169"/>
        <end position="176"/>
    </location>
    <ligand>
        <name>ATP</name>
        <dbReference type="ChEBI" id="CHEBI:30616"/>
    </ligand>
</feature>
<feature type="site" description="Required for activity" evidence="1">
    <location>
        <position position="362"/>
    </location>
</feature>
<sequence length="504" mass="55426">MNIKPEEITSIIRQQIENFNTNIETIDSGTIIQIGDGIARVYGLEDCMEGELIEFPNDVYGMALNLEQDNVGCVLLGSEEGIKEGNVVKRTKKVVEVPVGEALVGRVVNSLGMPIDGKGPVLTTETRDVEVPAPGVIDRQSVKEPLQTGIKAIDSMIPIGKGQRELIIGDRQTGKTAIAMDTILNQKGKDVICIYVAIGQKQSTVAHIVNDLTKMGAMDYTIVVSSTASDSAPLQYLAPYAGCSMGEYFMHKGKDVLIVYDDLSKHAVAYRTMSLLLRRPPGREAYPGDVFYLHSRLLERSARLSEKLGGGSLTALPIVETLAGDVTAYIPTNVISITDGQIFLESELFNAGQRPAVNAGISVSRVGGNAQIKAMKQVAGTLRLELAQYRELAAFSQFGSDLDKESVKRLEKGKRLVEILKQPQYSPMPVEKEIIILYAAVSNHLIDIPVNKIKEFEKELFNYIDTHYRDIGKDILEHKQLTDELKSKLDKAINDFKNVFLSEI</sequence>
<gene>
    <name evidence="1" type="primary">atpA</name>
    <name type="ordered locus">CBO0154</name>
    <name type="ordered locus">CLC_0202</name>
</gene>
<organism>
    <name type="scientific">Clostridium botulinum (strain Hall / ATCC 3502 / NCTC 13319 / Type A)</name>
    <dbReference type="NCBI Taxonomy" id="441771"/>
    <lineage>
        <taxon>Bacteria</taxon>
        <taxon>Bacillati</taxon>
        <taxon>Bacillota</taxon>
        <taxon>Clostridia</taxon>
        <taxon>Eubacteriales</taxon>
        <taxon>Clostridiaceae</taxon>
        <taxon>Clostridium</taxon>
    </lineage>
</organism>